<organism>
    <name type="scientific">Staphylococcus aureus (strain USA300 / TCH1516)</name>
    <dbReference type="NCBI Taxonomy" id="451516"/>
    <lineage>
        <taxon>Bacteria</taxon>
        <taxon>Bacillati</taxon>
        <taxon>Bacillota</taxon>
        <taxon>Bacilli</taxon>
        <taxon>Bacillales</taxon>
        <taxon>Staphylococcaceae</taxon>
        <taxon>Staphylococcus</taxon>
    </lineage>
</organism>
<keyword id="KW-0963">Cytoplasm</keyword>
<keyword id="KW-0238">DNA-binding</keyword>
<keyword id="KW-0677">Repeat</keyword>
<keyword id="KW-0804">Transcription</keyword>
<keyword id="KW-0805">Transcription regulation</keyword>
<reference key="1">
    <citation type="journal article" date="2007" name="BMC Microbiol.">
        <title>Subtle genetic changes enhance virulence of methicillin resistant and sensitive Staphylococcus aureus.</title>
        <authorList>
            <person name="Highlander S.K."/>
            <person name="Hulten K.G."/>
            <person name="Qin X."/>
            <person name="Jiang H."/>
            <person name="Yerrapragada S."/>
            <person name="Mason E.O. Jr."/>
            <person name="Shang Y."/>
            <person name="Williams T.M."/>
            <person name="Fortunov R.M."/>
            <person name="Liu Y."/>
            <person name="Igboeli O."/>
            <person name="Petrosino J."/>
            <person name="Tirumalai M."/>
            <person name="Uzman A."/>
            <person name="Fox G.E."/>
            <person name="Cardenas A.M."/>
            <person name="Muzny D.M."/>
            <person name="Hemphill L."/>
            <person name="Ding Y."/>
            <person name="Dugan S."/>
            <person name="Blyth P.R."/>
            <person name="Buhay C.J."/>
            <person name="Dinh H.H."/>
            <person name="Hawes A.C."/>
            <person name="Holder M."/>
            <person name="Kovar C.L."/>
            <person name="Lee S.L."/>
            <person name="Liu W."/>
            <person name="Nazareth L.V."/>
            <person name="Wang Q."/>
            <person name="Zhou J."/>
            <person name="Kaplan S.L."/>
            <person name="Weinstock G.M."/>
        </authorList>
    </citation>
    <scope>NUCLEOTIDE SEQUENCE [LARGE SCALE GENOMIC DNA]</scope>
    <source>
        <strain>USA300 / TCH1516</strain>
    </source>
</reference>
<sequence>MFMGEYDHQLDTKGRMIIPSKFRYDLNERFIITRGLDKCLFGYTLDEWQQIEEKMKTLPMTKKDARKFMRMFFSGAVEVELDKQGRINIPQNLRKYANLTKECTVIGVSNRIEIWDRETWNDFYEESEESFEDIAEDLIDFDF</sequence>
<accession>A8Z3L9</accession>
<proteinExistence type="inferred from homology"/>
<dbReference type="EMBL" id="CP000730">
    <property type="protein sequence ID" value="ABX29135.1"/>
    <property type="molecule type" value="Genomic_DNA"/>
</dbReference>
<dbReference type="RefSeq" id="WP_000480800.1">
    <property type="nucleotide sequence ID" value="NC_010079.1"/>
</dbReference>
<dbReference type="SMR" id="A8Z3L9"/>
<dbReference type="GeneID" id="66839371"/>
<dbReference type="KEGG" id="sax:USA300HOU_1118"/>
<dbReference type="HOGENOM" id="CLU_107907_0_5_9"/>
<dbReference type="GO" id="GO:0005737">
    <property type="term" value="C:cytoplasm"/>
    <property type="evidence" value="ECO:0007669"/>
    <property type="project" value="UniProtKB-UniRule"/>
</dbReference>
<dbReference type="GO" id="GO:0009295">
    <property type="term" value="C:nucleoid"/>
    <property type="evidence" value="ECO:0007669"/>
    <property type="project" value="UniProtKB-SubCell"/>
</dbReference>
<dbReference type="GO" id="GO:0003700">
    <property type="term" value="F:DNA-binding transcription factor activity"/>
    <property type="evidence" value="ECO:0007669"/>
    <property type="project" value="UniProtKB-UniRule"/>
</dbReference>
<dbReference type="GO" id="GO:0000976">
    <property type="term" value="F:transcription cis-regulatory region binding"/>
    <property type="evidence" value="ECO:0007669"/>
    <property type="project" value="TreeGrafter"/>
</dbReference>
<dbReference type="GO" id="GO:2000143">
    <property type="term" value="P:negative regulation of DNA-templated transcription initiation"/>
    <property type="evidence" value="ECO:0007669"/>
    <property type="project" value="TreeGrafter"/>
</dbReference>
<dbReference type="CDD" id="cd16321">
    <property type="entry name" value="MraZ_C"/>
    <property type="match status" value="1"/>
</dbReference>
<dbReference type="CDD" id="cd16320">
    <property type="entry name" value="MraZ_N"/>
    <property type="match status" value="1"/>
</dbReference>
<dbReference type="FunFam" id="3.40.1550.20:FF:000002">
    <property type="entry name" value="Transcriptional regulator MraZ"/>
    <property type="match status" value="1"/>
</dbReference>
<dbReference type="Gene3D" id="3.40.1550.20">
    <property type="entry name" value="Transcriptional regulator MraZ domain"/>
    <property type="match status" value="1"/>
</dbReference>
<dbReference type="HAMAP" id="MF_01008">
    <property type="entry name" value="MraZ"/>
    <property type="match status" value="1"/>
</dbReference>
<dbReference type="InterPro" id="IPR003444">
    <property type="entry name" value="MraZ"/>
</dbReference>
<dbReference type="InterPro" id="IPR035644">
    <property type="entry name" value="MraZ_C"/>
</dbReference>
<dbReference type="InterPro" id="IPR020603">
    <property type="entry name" value="MraZ_dom"/>
</dbReference>
<dbReference type="InterPro" id="IPR035642">
    <property type="entry name" value="MraZ_N"/>
</dbReference>
<dbReference type="InterPro" id="IPR038619">
    <property type="entry name" value="MraZ_sf"/>
</dbReference>
<dbReference type="InterPro" id="IPR007159">
    <property type="entry name" value="SpoVT-AbrB_dom"/>
</dbReference>
<dbReference type="InterPro" id="IPR037914">
    <property type="entry name" value="SpoVT-AbrB_sf"/>
</dbReference>
<dbReference type="NCBIfam" id="TIGR00242">
    <property type="entry name" value="division/cell wall cluster transcriptional repressor MraZ"/>
    <property type="match status" value="1"/>
</dbReference>
<dbReference type="PANTHER" id="PTHR34701">
    <property type="entry name" value="TRANSCRIPTIONAL REGULATOR MRAZ"/>
    <property type="match status" value="1"/>
</dbReference>
<dbReference type="PANTHER" id="PTHR34701:SF1">
    <property type="entry name" value="TRANSCRIPTIONAL REGULATOR MRAZ"/>
    <property type="match status" value="1"/>
</dbReference>
<dbReference type="Pfam" id="PF02381">
    <property type="entry name" value="MraZ"/>
    <property type="match status" value="2"/>
</dbReference>
<dbReference type="SUPFAM" id="SSF89447">
    <property type="entry name" value="AbrB/MazE/MraZ-like"/>
    <property type="match status" value="1"/>
</dbReference>
<dbReference type="PROSITE" id="PS51740">
    <property type="entry name" value="SPOVT_ABRB"/>
    <property type="match status" value="2"/>
</dbReference>
<feature type="chain" id="PRO_1000084026" description="Transcriptional regulator MraZ">
    <location>
        <begin position="1"/>
        <end position="143"/>
    </location>
</feature>
<feature type="domain" description="SpoVT-AbrB 1" evidence="2">
    <location>
        <begin position="5"/>
        <end position="47"/>
    </location>
</feature>
<feature type="domain" description="SpoVT-AbrB 2" evidence="2">
    <location>
        <begin position="76"/>
        <end position="119"/>
    </location>
</feature>
<name>MRAZ_STAAT</name>
<gene>
    <name evidence="1" type="primary">mraZ</name>
    <name type="ordered locus">USA300HOU_1118</name>
</gene>
<evidence type="ECO:0000255" key="1">
    <source>
        <dbReference type="HAMAP-Rule" id="MF_01008"/>
    </source>
</evidence>
<evidence type="ECO:0000255" key="2">
    <source>
        <dbReference type="PROSITE-ProRule" id="PRU01076"/>
    </source>
</evidence>
<protein>
    <recommendedName>
        <fullName>Transcriptional regulator MraZ</fullName>
    </recommendedName>
</protein>
<comment type="subunit">
    <text evidence="1">Forms oligomers.</text>
</comment>
<comment type="subcellular location">
    <subcellularLocation>
        <location evidence="1">Cytoplasm</location>
        <location evidence="1">Nucleoid</location>
    </subcellularLocation>
</comment>
<comment type="similarity">
    <text evidence="1">Belongs to the MraZ family.</text>
</comment>